<name>CARB_HALH5</name>
<sequence>MGKREDIKKILVIGSGPIVIGQAAEFDYAGTQACQALKEEGYEVILVNSNPATIMTDTTMADRVYIEPLTLEFVSRIIRMERPDGILPTLGGQTGLNMAVELDQAGILKEYNVELLGTKLDSIQQAEDRDLFRALMKELNEPVPDSEIIHTLEEAYTFVERVGYPIIVRPAYTLGGTGGGLVYNEEDLVEIVTSGLKYSPVTQCLVEKSIAGFKEIEYEVMRDGKDHAIVVCNMENIDPVGVHTGDSIVVAPSQTLSDREYQMLRNSSLKIIRALGIEGGCNVQFALDPDSFQYYIIEVNPRVSRSSALASKATGYPIAKIAAKIAVGYTLDELLNPITQTTYASFEPALDYVVSKIPRWPFDKFEAANRSLGTQMKATGEVMAIGRNLEESLLKAVRSLEAGVYHLDQPDVNDLDKESLEKKLTKPDDERLFALGEAIRRGYTIEELWALTKIDRFFLRSFARIIQLETQLKENVGDLELLKEAKERGFSDMIIADLWGTSEQEVYELRMNHGLSPVYKMVDTCAAEFASATPYFYGTYEEENESERTDKKSILVLGSGPIRIGQGIEFDYATVHTVWAIKEAGYEAIIVNNNPETVSTDFSTSDKLYFEPLTVEDVMHIVNLEQPEGVIVQFGGQTAINLASELAARGVKIIGTALEDMDRAEDRDKFEQTLVELNIPQPLGDTATSIEEARQIAERIGYPVLVRPSYVLGGRAMEIVYKEEELLNYMAHAVKVNPKHPVLIDRYLTGKELEVDAISDGENVYIPGIMEHIERAGVHSGDSIAVYPPQTVPESLKQKLIERTIELARGLRIVGLLNIQFVWHKDDVYVLEVNPRSSRTVPFLSKVTGVPMANVATKVMLGKTLPQLGYETGYHPEAKEVSVKVPVFSFAKLRRVDITLGPEMKSTGEVMGRDKTLEKALYKGLIASGMSIPTHGSVLFTIADKDKQEAISLAKRFYQIGFSILATEGTAHILHEEGIPVTTVNKISDEKPHLLDVIRAGDAQFVINTLTRGKQPARDGFRIRRESVENGVVCLTSLDTAEALLRVLESITFSAESMPVMQ</sequence>
<keyword id="KW-0028">Amino-acid biosynthesis</keyword>
<keyword id="KW-0055">Arginine biosynthesis</keyword>
<keyword id="KW-0067">ATP-binding</keyword>
<keyword id="KW-0436">Ligase</keyword>
<keyword id="KW-0460">Magnesium</keyword>
<keyword id="KW-0464">Manganese</keyword>
<keyword id="KW-0479">Metal-binding</keyword>
<keyword id="KW-0547">Nucleotide-binding</keyword>
<keyword id="KW-0665">Pyrimidine biosynthesis</keyword>
<keyword id="KW-1185">Reference proteome</keyword>
<keyword id="KW-0677">Repeat</keyword>
<accession>Q9K9V9</accession>
<evidence type="ECO:0000255" key="1">
    <source>
        <dbReference type="HAMAP-Rule" id="MF_01210"/>
    </source>
</evidence>
<evidence type="ECO:0000305" key="2"/>
<proteinExistence type="inferred from homology"/>
<organism>
    <name type="scientific">Halalkalibacterium halodurans (strain ATCC BAA-125 / DSM 18197 / FERM 7344 / JCM 9153 / C-125)</name>
    <name type="common">Bacillus halodurans</name>
    <dbReference type="NCBI Taxonomy" id="272558"/>
    <lineage>
        <taxon>Bacteria</taxon>
        <taxon>Bacillati</taxon>
        <taxon>Bacillota</taxon>
        <taxon>Bacilli</taxon>
        <taxon>Bacillales</taxon>
        <taxon>Bacillaceae</taxon>
        <taxon>Halalkalibacterium (ex Joshi et al. 2022)</taxon>
    </lineage>
</organism>
<comment type="function">
    <text evidence="2">Small subunit of the glutamine-dependent carbamoyl phosphate synthetase (CPSase). CPSase catalyzes the formation of carbamoyl phosphate from the ammonia moiety of glutamine, carbonate, and phosphate donated by ATP, constituting the first step of the biosynthetic pathway leading to pyrimidine nucleotides. The large subunit (synthetase) binds the substrates ammonia (free or transferred from glutamine from the small subunit), hydrogencarbonate and ATP and carries out an ATP-coupled ligase reaction, activating hydrogencarbonate by forming carboxy phosphate which reacts with ammonia to form carbamoyl phosphate.</text>
</comment>
<comment type="catalytic activity">
    <reaction evidence="1">
        <text>hydrogencarbonate + L-glutamine + 2 ATP + H2O = carbamoyl phosphate + L-glutamate + 2 ADP + phosphate + 2 H(+)</text>
        <dbReference type="Rhea" id="RHEA:18633"/>
        <dbReference type="ChEBI" id="CHEBI:15377"/>
        <dbReference type="ChEBI" id="CHEBI:15378"/>
        <dbReference type="ChEBI" id="CHEBI:17544"/>
        <dbReference type="ChEBI" id="CHEBI:29985"/>
        <dbReference type="ChEBI" id="CHEBI:30616"/>
        <dbReference type="ChEBI" id="CHEBI:43474"/>
        <dbReference type="ChEBI" id="CHEBI:58228"/>
        <dbReference type="ChEBI" id="CHEBI:58359"/>
        <dbReference type="ChEBI" id="CHEBI:456216"/>
        <dbReference type="EC" id="6.3.5.5"/>
    </reaction>
</comment>
<comment type="catalytic activity">
    <molecule>Carbamoyl phosphate synthase pyrimidine-specific large chain</molecule>
    <reaction evidence="1">
        <text>hydrogencarbonate + NH4(+) + 2 ATP = carbamoyl phosphate + 2 ADP + phosphate + 2 H(+)</text>
        <dbReference type="Rhea" id="RHEA:18029"/>
        <dbReference type="ChEBI" id="CHEBI:15378"/>
        <dbReference type="ChEBI" id="CHEBI:17544"/>
        <dbReference type="ChEBI" id="CHEBI:28938"/>
        <dbReference type="ChEBI" id="CHEBI:30616"/>
        <dbReference type="ChEBI" id="CHEBI:43474"/>
        <dbReference type="ChEBI" id="CHEBI:58228"/>
        <dbReference type="ChEBI" id="CHEBI:456216"/>
        <dbReference type="EC" id="6.3.4.16"/>
    </reaction>
</comment>
<comment type="cofactor">
    <cofactor evidence="1">
        <name>Mg(2+)</name>
        <dbReference type="ChEBI" id="CHEBI:18420"/>
    </cofactor>
    <cofactor evidence="1">
        <name>Mn(2+)</name>
        <dbReference type="ChEBI" id="CHEBI:29035"/>
    </cofactor>
    <text evidence="1">Binds 4 Mg(2+) or Mn(2+) ions per subunit.</text>
</comment>
<comment type="pathway">
    <text evidence="1">Amino-acid biosynthesis; L-arginine biosynthesis; carbamoyl phosphate from bicarbonate: step 1/1.</text>
</comment>
<comment type="pathway">
    <text evidence="1">Pyrimidine metabolism; UMP biosynthesis via de novo pathway; (S)-dihydroorotate from bicarbonate: step 1/3.</text>
</comment>
<comment type="subunit">
    <text evidence="1">Composed of two chains; the small (or glutamine) chain promotes the hydrolysis of glutamine to ammonia, which is used by the large (or ammonia) chain to synthesize carbamoyl phosphate. Tetramer of heterodimers (alpha,beta)4.</text>
</comment>
<comment type="domain">
    <text evidence="1">The large subunit is composed of 2 ATP-grasp domains that are involved in binding the 2 ATP molecules needed for carbamoyl phosphate synthesis. The N-terminal ATP-grasp domain (referred to as the carboxyphosphate synthetic component) catalyzes the ATP-dependent phosphorylation of hydrogencarbonate to carboxyphosphate and the subsequent nucleophilic attack by ammonia to form a carbamate intermediate. The C-terminal ATP-grasp domain (referred to as the carbamoyl phosphate synthetic component) then catalyzes the phosphorylation of carbamate with the second ATP to form the end product carbamoyl phosphate. The reactive and unstable enzyme intermediates are sequentially channeled from one active site to the next through the interior of the protein over a distance of at least 96 A.</text>
</comment>
<comment type="similarity">
    <text evidence="1">Belongs to the CarB family.</text>
</comment>
<dbReference type="EC" id="6.3.4.16" evidence="1"/>
<dbReference type="EC" id="6.3.5.5" evidence="1"/>
<dbReference type="EMBL" id="BA000004">
    <property type="protein sequence ID" value="BAB06255.1"/>
    <property type="molecule type" value="Genomic_DNA"/>
</dbReference>
<dbReference type="PIR" id="H83966">
    <property type="entry name" value="H83966"/>
</dbReference>
<dbReference type="RefSeq" id="WP_010898687.1">
    <property type="nucleotide sequence ID" value="NC_002570.2"/>
</dbReference>
<dbReference type="SMR" id="Q9K9V9"/>
<dbReference type="STRING" id="272558.gene:10728434"/>
<dbReference type="KEGG" id="bha:BH2536"/>
<dbReference type="eggNOG" id="COG0458">
    <property type="taxonomic scope" value="Bacteria"/>
</dbReference>
<dbReference type="HOGENOM" id="CLU_000513_1_0_9"/>
<dbReference type="OrthoDB" id="9804197at2"/>
<dbReference type="UniPathway" id="UPA00068">
    <property type="reaction ID" value="UER00171"/>
</dbReference>
<dbReference type="UniPathway" id="UPA00070">
    <property type="reaction ID" value="UER00115"/>
</dbReference>
<dbReference type="Proteomes" id="UP000001258">
    <property type="component" value="Chromosome"/>
</dbReference>
<dbReference type="GO" id="GO:0005737">
    <property type="term" value="C:cytoplasm"/>
    <property type="evidence" value="ECO:0007669"/>
    <property type="project" value="TreeGrafter"/>
</dbReference>
<dbReference type="GO" id="GO:0005524">
    <property type="term" value="F:ATP binding"/>
    <property type="evidence" value="ECO:0007669"/>
    <property type="project" value="UniProtKB-UniRule"/>
</dbReference>
<dbReference type="GO" id="GO:0004087">
    <property type="term" value="F:carbamoyl-phosphate synthase (ammonia) activity"/>
    <property type="evidence" value="ECO:0007669"/>
    <property type="project" value="RHEA"/>
</dbReference>
<dbReference type="GO" id="GO:0004088">
    <property type="term" value="F:carbamoyl-phosphate synthase (glutamine-hydrolyzing) activity"/>
    <property type="evidence" value="ECO:0007669"/>
    <property type="project" value="UniProtKB-UniRule"/>
</dbReference>
<dbReference type="GO" id="GO:0046872">
    <property type="term" value="F:metal ion binding"/>
    <property type="evidence" value="ECO:0007669"/>
    <property type="project" value="UniProtKB-KW"/>
</dbReference>
<dbReference type="GO" id="GO:0044205">
    <property type="term" value="P:'de novo' UMP biosynthetic process"/>
    <property type="evidence" value="ECO:0007669"/>
    <property type="project" value="UniProtKB-UniRule"/>
</dbReference>
<dbReference type="GO" id="GO:0006541">
    <property type="term" value="P:glutamine metabolic process"/>
    <property type="evidence" value="ECO:0007669"/>
    <property type="project" value="TreeGrafter"/>
</dbReference>
<dbReference type="GO" id="GO:0006526">
    <property type="term" value="P:L-arginine biosynthetic process"/>
    <property type="evidence" value="ECO:0007669"/>
    <property type="project" value="UniProtKB-UniRule"/>
</dbReference>
<dbReference type="CDD" id="cd01424">
    <property type="entry name" value="MGS_CPS_II"/>
    <property type="match status" value="1"/>
</dbReference>
<dbReference type="FunFam" id="1.10.1030.10:FF:000002">
    <property type="entry name" value="Carbamoyl-phosphate synthase large chain"/>
    <property type="match status" value="1"/>
</dbReference>
<dbReference type="FunFam" id="3.30.1490.20:FF:000001">
    <property type="entry name" value="Carbamoyl-phosphate synthase large chain"/>
    <property type="match status" value="1"/>
</dbReference>
<dbReference type="FunFam" id="3.30.470.20:FF:000001">
    <property type="entry name" value="Carbamoyl-phosphate synthase large chain"/>
    <property type="match status" value="1"/>
</dbReference>
<dbReference type="FunFam" id="3.30.470.20:FF:000026">
    <property type="entry name" value="Carbamoyl-phosphate synthase large chain"/>
    <property type="match status" value="1"/>
</dbReference>
<dbReference type="FunFam" id="3.40.50.1380:FF:000011">
    <property type="entry name" value="Carbamoyl-phosphate synthase large chain"/>
    <property type="match status" value="1"/>
</dbReference>
<dbReference type="FunFam" id="3.40.50.20:FF:000001">
    <property type="entry name" value="Carbamoyl-phosphate synthase large chain"/>
    <property type="match status" value="2"/>
</dbReference>
<dbReference type="Gene3D" id="3.40.50.20">
    <property type="match status" value="2"/>
</dbReference>
<dbReference type="Gene3D" id="3.30.1490.20">
    <property type="entry name" value="ATP-grasp fold, A domain"/>
    <property type="match status" value="1"/>
</dbReference>
<dbReference type="Gene3D" id="3.30.470.20">
    <property type="entry name" value="ATP-grasp fold, B domain"/>
    <property type="match status" value="2"/>
</dbReference>
<dbReference type="Gene3D" id="1.10.1030.10">
    <property type="entry name" value="Carbamoyl-phosphate synthetase, large subunit oligomerisation domain"/>
    <property type="match status" value="1"/>
</dbReference>
<dbReference type="Gene3D" id="3.40.50.1380">
    <property type="entry name" value="Methylglyoxal synthase-like domain"/>
    <property type="match status" value="1"/>
</dbReference>
<dbReference type="HAMAP" id="MF_01210_A">
    <property type="entry name" value="CPSase_L_chain_A"/>
    <property type="match status" value="1"/>
</dbReference>
<dbReference type="HAMAP" id="MF_01210_B">
    <property type="entry name" value="CPSase_L_chain_B"/>
    <property type="match status" value="1"/>
</dbReference>
<dbReference type="InterPro" id="IPR011761">
    <property type="entry name" value="ATP-grasp"/>
</dbReference>
<dbReference type="InterPro" id="IPR013815">
    <property type="entry name" value="ATP_grasp_subdomain_1"/>
</dbReference>
<dbReference type="InterPro" id="IPR006275">
    <property type="entry name" value="CarbamoylP_synth_lsu"/>
</dbReference>
<dbReference type="InterPro" id="IPR005480">
    <property type="entry name" value="CarbamoylP_synth_lsu_oligo"/>
</dbReference>
<dbReference type="InterPro" id="IPR036897">
    <property type="entry name" value="CarbamoylP_synth_lsu_oligo_sf"/>
</dbReference>
<dbReference type="InterPro" id="IPR005479">
    <property type="entry name" value="CbamoylP_synth_lsu-like_ATP-bd"/>
</dbReference>
<dbReference type="InterPro" id="IPR005483">
    <property type="entry name" value="CbamoylP_synth_lsu_CPSase_dom"/>
</dbReference>
<dbReference type="InterPro" id="IPR011607">
    <property type="entry name" value="MGS-like_dom"/>
</dbReference>
<dbReference type="InterPro" id="IPR036914">
    <property type="entry name" value="MGS-like_dom_sf"/>
</dbReference>
<dbReference type="InterPro" id="IPR033937">
    <property type="entry name" value="MGS_CPS_CarB"/>
</dbReference>
<dbReference type="InterPro" id="IPR016185">
    <property type="entry name" value="PreATP-grasp_dom_sf"/>
</dbReference>
<dbReference type="NCBIfam" id="TIGR01369">
    <property type="entry name" value="CPSaseII_lrg"/>
    <property type="match status" value="1"/>
</dbReference>
<dbReference type="NCBIfam" id="NF003671">
    <property type="entry name" value="PRK05294.1"/>
    <property type="match status" value="1"/>
</dbReference>
<dbReference type="NCBIfam" id="NF009455">
    <property type="entry name" value="PRK12815.1"/>
    <property type="match status" value="1"/>
</dbReference>
<dbReference type="PANTHER" id="PTHR11405:SF53">
    <property type="entry name" value="CARBAMOYL-PHOSPHATE SYNTHASE [AMMONIA], MITOCHONDRIAL"/>
    <property type="match status" value="1"/>
</dbReference>
<dbReference type="PANTHER" id="PTHR11405">
    <property type="entry name" value="CARBAMOYLTRANSFERASE FAMILY MEMBER"/>
    <property type="match status" value="1"/>
</dbReference>
<dbReference type="Pfam" id="PF02786">
    <property type="entry name" value="CPSase_L_D2"/>
    <property type="match status" value="2"/>
</dbReference>
<dbReference type="Pfam" id="PF02787">
    <property type="entry name" value="CPSase_L_D3"/>
    <property type="match status" value="1"/>
</dbReference>
<dbReference type="Pfam" id="PF02142">
    <property type="entry name" value="MGS"/>
    <property type="match status" value="1"/>
</dbReference>
<dbReference type="PRINTS" id="PR00098">
    <property type="entry name" value="CPSASE"/>
</dbReference>
<dbReference type="SMART" id="SM01096">
    <property type="entry name" value="CPSase_L_D3"/>
    <property type="match status" value="1"/>
</dbReference>
<dbReference type="SMART" id="SM01209">
    <property type="entry name" value="GARS_A"/>
    <property type="match status" value="1"/>
</dbReference>
<dbReference type="SMART" id="SM00851">
    <property type="entry name" value="MGS"/>
    <property type="match status" value="1"/>
</dbReference>
<dbReference type="SUPFAM" id="SSF48108">
    <property type="entry name" value="Carbamoyl phosphate synthetase, large subunit connection domain"/>
    <property type="match status" value="1"/>
</dbReference>
<dbReference type="SUPFAM" id="SSF56059">
    <property type="entry name" value="Glutathione synthetase ATP-binding domain-like"/>
    <property type="match status" value="2"/>
</dbReference>
<dbReference type="SUPFAM" id="SSF52335">
    <property type="entry name" value="Methylglyoxal synthase-like"/>
    <property type="match status" value="1"/>
</dbReference>
<dbReference type="SUPFAM" id="SSF52440">
    <property type="entry name" value="PreATP-grasp domain"/>
    <property type="match status" value="2"/>
</dbReference>
<dbReference type="PROSITE" id="PS50975">
    <property type="entry name" value="ATP_GRASP"/>
    <property type="match status" value="2"/>
</dbReference>
<dbReference type="PROSITE" id="PS00866">
    <property type="entry name" value="CPSASE_1"/>
    <property type="match status" value="2"/>
</dbReference>
<dbReference type="PROSITE" id="PS00867">
    <property type="entry name" value="CPSASE_2"/>
    <property type="match status" value="2"/>
</dbReference>
<dbReference type="PROSITE" id="PS51855">
    <property type="entry name" value="MGS"/>
    <property type="match status" value="1"/>
</dbReference>
<feature type="chain" id="PRO_0000144987" description="Carbamoyl phosphate synthase pyrimidine-specific large chain">
    <location>
        <begin position="1"/>
        <end position="1062"/>
    </location>
</feature>
<feature type="domain" description="ATP-grasp 1" evidence="1">
    <location>
        <begin position="133"/>
        <end position="327"/>
    </location>
</feature>
<feature type="domain" description="ATP-grasp 2" evidence="1">
    <location>
        <begin position="671"/>
        <end position="861"/>
    </location>
</feature>
<feature type="domain" description="MGS-like" evidence="1">
    <location>
        <begin position="930"/>
        <end position="1062"/>
    </location>
</feature>
<feature type="region of interest" description="Carboxyphosphate synthetic domain" evidence="1">
    <location>
        <begin position="1"/>
        <end position="401"/>
    </location>
</feature>
<feature type="region of interest" description="Oligomerization domain" evidence="1">
    <location>
        <begin position="402"/>
        <end position="546"/>
    </location>
</feature>
<feature type="region of interest" description="Carbamoyl phosphate synthetic domain" evidence="1">
    <location>
        <begin position="547"/>
        <end position="929"/>
    </location>
</feature>
<feature type="region of interest" description="Allosteric domain" evidence="1">
    <location>
        <begin position="930"/>
        <end position="1062"/>
    </location>
</feature>
<feature type="binding site" evidence="1">
    <location>
        <position position="129"/>
    </location>
    <ligand>
        <name>ATP</name>
        <dbReference type="ChEBI" id="CHEBI:30616"/>
        <label>1</label>
    </ligand>
</feature>
<feature type="binding site" evidence="1">
    <location>
        <position position="169"/>
    </location>
    <ligand>
        <name>ATP</name>
        <dbReference type="ChEBI" id="CHEBI:30616"/>
        <label>1</label>
    </ligand>
</feature>
<feature type="binding site" evidence="1">
    <location>
        <position position="175"/>
    </location>
    <ligand>
        <name>ATP</name>
        <dbReference type="ChEBI" id="CHEBI:30616"/>
        <label>1</label>
    </ligand>
</feature>
<feature type="binding site" evidence="1">
    <location>
        <position position="176"/>
    </location>
    <ligand>
        <name>ATP</name>
        <dbReference type="ChEBI" id="CHEBI:30616"/>
        <label>1</label>
    </ligand>
</feature>
<feature type="binding site" evidence="1">
    <location>
        <position position="208"/>
    </location>
    <ligand>
        <name>ATP</name>
        <dbReference type="ChEBI" id="CHEBI:30616"/>
        <label>1</label>
    </ligand>
</feature>
<feature type="binding site" evidence="1">
    <location>
        <position position="210"/>
    </location>
    <ligand>
        <name>ATP</name>
        <dbReference type="ChEBI" id="CHEBI:30616"/>
        <label>1</label>
    </ligand>
</feature>
<feature type="binding site" evidence="1">
    <location>
        <position position="215"/>
    </location>
    <ligand>
        <name>ATP</name>
        <dbReference type="ChEBI" id="CHEBI:30616"/>
        <label>1</label>
    </ligand>
</feature>
<feature type="binding site" evidence="1">
    <location>
        <position position="241"/>
    </location>
    <ligand>
        <name>ATP</name>
        <dbReference type="ChEBI" id="CHEBI:30616"/>
        <label>1</label>
    </ligand>
</feature>
<feature type="binding site" evidence="1">
    <location>
        <position position="242"/>
    </location>
    <ligand>
        <name>ATP</name>
        <dbReference type="ChEBI" id="CHEBI:30616"/>
        <label>1</label>
    </ligand>
</feature>
<feature type="binding site" evidence="1">
    <location>
        <position position="243"/>
    </location>
    <ligand>
        <name>ATP</name>
        <dbReference type="ChEBI" id="CHEBI:30616"/>
        <label>1</label>
    </ligand>
</feature>
<feature type="binding site" evidence="1">
    <location>
        <position position="284"/>
    </location>
    <ligand>
        <name>ATP</name>
        <dbReference type="ChEBI" id="CHEBI:30616"/>
        <label>1</label>
    </ligand>
</feature>
<feature type="binding site" evidence="1">
    <location>
        <position position="284"/>
    </location>
    <ligand>
        <name>Mg(2+)</name>
        <dbReference type="ChEBI" id="CHEBI:18420"/>
        <label>1</label>
    </ligand>
</feature>
<feature type="binding site" evidence="1">
    <location>
        <position position="284"/>
    </location>
    <ligand>
        <name>Mn(2+)</name>
        <dbReference type="ChEBI" id="CHEBI:29035"/>
        <label>1</label>
    </ligand>
</feature>
<feature type="binding site" evidence="1">
    <location>
        <position position="298"/>
    </location>
    <ligand>
        <name>ATP</name>
        <dbReference type="ChEBI" id="CHEBI:30616"/>
        <label>1</label>
    </ligand>
</feature>
<feature type="binding site" evidence="1">
    <location>
        <position position="298"/>
    </location>
    <ligand>
        <name>Mg(2+)</name>
        <dbReference type="ChEBI" id="CHEBI:18420"/>
        <label>1</label>
    </ligand>
</feature>
<feature type="binding site" evidence="1">
    <location>
        <position position="298"/>
    </location>
    <ligand>
        <name>Mg(2+)</name>
        <dbReference type="ChEBI" id="CHEBI:18420"/>
        <label>2</label>
    </ligand>
</feature>
<feature type="binding site" evidence="1">
    <location>
        <position position="298"/>
    </location>
    <ligand>
        <name>Mn(2+)</name>
        <dbReference type="ChEBI" id="CHEBI:29035"/>
        <label>1</label>
    </ligand>
</feature>
<feature type="binding site" evidence="1">
    <location>
        <position position="298"/>
    </location>
    <ligand>
        <name>Mn(2+)</name>
        <dbReference type="ChEBI" id="CHEBI:29035"/>
        <label>2</label>
    </ligand>
</feature>
<feature type="binding site" evidence="1">
    <location>
        <position position="300"/>
    </location>
    <ligand>
        <name>Mg(2+)</name>
        <dbReference type="ChEBI" id="CHEBI:18420"/>
        <label>2</label>
    </ligand>
</feature>
<feature type="binding site" evidence="1">
    <location>
        <position position="300"/>
    </location>
    <ligand>
        <name>Mn(2+)</name>
        <dbReference type="ChEBI" id="CHEBI:29035"/>
        <label>2</label>
    </ligand>
</feature>
<feature type="binding site" evidence="1">
    <location>
        <position position="707"/>
    </location>
    <ligand>
        <name>ATP</name>
        <dbReference type="ChEBI" id="CHEBI:30616"/>
        <label>2</label>
    </ligand>
</feature>
<feature type="binding site" evidence="1">
    <location>
        <position position="746"/>
    </location>
    <ligand>
        <name>ATP</name>
        <dbReference type="ChEBI" id="CHEBI:30616"/>
        <label>2</label>
    </ligand>
</feature>
<feature type="binding site" evidence="1">
    <location>
        <position position="748"/>
    </location>
    <ligand>
        <name>ATP</name>
        <dbReference type="ChEBI" id="CHEBI:30616"/>
        <label>2</label>
    </ligand>
</feature>
<feature type="binding site" evidence="1">
    <location>
        <position position="752"/>
    </location>
    <ligand>
        <name>ATP</name>
        <dbReference type="ChEBI" id="CHEBI:30616"/>
        <label>2</label>
    </ligand>
</feature>
<feature type="binding site" evidence="1">
    <location>
        <position position="777"/>
    </location>
    <ligand>
        <name>ATP</name>
        <dbReference type="ChEBI" id="CHEBI:30616"/>
        <label>2</label>
    </ligand>
</feature>
<feature type="binding site" evidence="1">
    <location>
        <position position="778"/>
    </location>
    <ligand>
        <name>ATP</name>
        <dbReference type="ChEBI" id="CHEBI:30616"/>
        <label>2</label>
    </ligand>
</feature>
<feature type="binding site" evidence="1">
    <location>
        <position position="779"/>
    </location>
    <ligand>
        <name>ATP</name>
        <dbReference type="ChEBI" id="CHEBI:30616"/>
        <label>2</label>
    </ligand>
</feature>
<feature type="binding site" evidence="1">
    <location>
        <position position="780"/>
    </location>
    <ligand>
        <name>ATP</name>
        <dbReference type="ChEBI" id="CHEBI:30616"/>
        <label>2</label>
    </ligand>
</feature>
<feature type="binding site" evidence="1">
    <location>
        <position position="820"/>
    </location>
    <ligand>
        <name>ATP</name>
        <dbReference type="ChEBI" id="CHEBI:30616"/>
        <label>2</label>
    </ligand>
</feature>
<feature type="binding site" evidence="1">
    <location>
        <position position="820"/>
    </location>
    <ligand>
        <name>Mg(2+)</name>
        <dbReference type="ChEBI" id="CHEBI:18420"/>
        <label>3</label>
    </ligand>
</feature>
<feature type="binding site" evidence="1">
    <location>
        <position position="820"/>
    </location>
    <ligand>
        <name>Mn(2+)</name>
        <dbReference type="ChEBI" id="CHEBI:29035"/>
        <label>3</label>
    </ligand>
</feature>
<feature type="binding site" evidence="1">
    <location>
        <position position="832"/>
    </location>
    <ligand>
        <name>ATP</name>
        <dbReference type="ChEBI" id="CHEBI:30616"/>
        <label>2</label>
    </ligand>
</feature>
<feature type="binding site" evidence="1">
    <location>
        <position position="832"/>
    </location>
    <ligand>
        <name>Mg(2+)</name>
        <dbReference type="ChEBI" id="CHEBI:18420"/>
        <label>3</label>
    </ligand>
</feature>
<feature type="binding site" evidence="1">
    <location>
        <position position="832"/>
    </location>
    <ligand>
        <name>Mg(2+)</name>
        <dbReference type="ChEBI" id="CHEBI:18420"/>
        <label>4</label>
    </ligand>
</feature>
<feature type="binding site" evidence="1">
    <location>
        <position position="832"/>
    </location>
    <ligand>
        <name>Mn(2+)</name>
        <dbReference type="ChEBI" id="CHEBI:29035"/>
        <label>3</label>
    </ligand>
</feature>
<feature type="binding site" evidence="1">
    <location>
        <position position="832"/>
    </location>
    <ligand>
        <name>Mn(2+)</name>
        <dbReference type="ChEBI" id="CHEBI:29035"/>
        <label>4</label>
    </ligand>
</feature>
<feature type="binding site" evidence="1">
    <location>
        <position position="834"/>
    </location>
    <ligand>
        <name>Mg(2+)</name>
        <dbReference type="ChEBI" id="CHEBI:18420"/>
        <label>4</label>
    </ligand>
</feature>
<feature type="binding site" evidence="1">
    <location>
        <position position="834"/>
    </location>
    <ligand>
        <name>Mn(2+)</name>
        <dbReference type="ChEBI" id="CHEBI:29035"/>
        <label>4</label>
    </ligand>
</feature>
<protein>
    <recommendedName>
        <fullName evidence="2">Carbamoyl phosphate synthase pyrimidine-specific large chain</fullName>
        <ecNumber evidence="1">6.3.4.16</ecNumber>
        <ecNumber evidence="1">6.3.5.5</ecNumber>
    </recommendedName>
    <alternativeName>
        <fullName evidence="1">Carbamoyl phosphate synthetase ammonia chain</fullName>
    </alternativeName>
</protein>
<reference key="1">
    <citation type="journal article" date="2000" name="Nucleic Acids Res.">
        <title>Complete genome sequence of the alkaliphilic bacterium Bacillus halodurans and genomic sequence comparison with Bacillus subtilis.</title>
        <authorList>
            <person name="Takami H."/>
            <person name="Nakasone K."/>
            <person name="Takaki Y."/>
            <person name="Maeno G."/>
            <person name="Sasaki R."/>
            <person name="Masui N."/>
            <person name="Fuji F."/>
            <person name="Hirama C."/>
            <person name="Nakamura Y."/>
            <person name="Ogasawara N."/>
            <person name="Kuhara S."/>
            <person name="Horikoshi K."/>
        </authorList>
    </citation>
    <scope>NUCLEOTIDE SEQUENCE [LARGE SCALE GENOMIC DNA]</scope>
    <source>
        <strain>ATCC BAA-125 / DSM 18197 / FERM 7344 / JCM 9153 / C-125</strain>
    </source>
</reference>
<gene>
    <name type="primary">pyrAB</name>
    <name type="ordered locus">BH2536</name>
</gene>